<organismHost>
    <name type="scientific">Homo sapiens</name>
    <name type="common">Human</name>
    <dbReference type="NCBI Taxonomy" id="9606"/>
</organismHost>
<proteinExistence type="inferred from homology"/>
<sequence>MGGKWSKHSVPGWSTVRERMRRAEPATDRVRQTEPAAVGVGAVSRDLEKHGAITSSNTAATNADCAWLEAYEDEEVGFPVRPQVPLRPMTYKAAIDLSHFLKEKGGLEGLIYSQKRQDILDLWIYHTQGYFPDWQNYTAGPGVRFPLTFGWCFKLVPVDPEKVEEANEGENNCLLHPMSQHGMDDPEKEVLVWKFDSKLALHHVARELHPEYYKDC</sequence>
<feature type="initiator methionine" description="Removed; by host" evidence="1">
    <location>
        <position position="1"/>
    </location>
</feature>
<feature type="chain" id="PRO_0000038337" description="Protein Nef" evidence="1">
    <location>
        <begin position="2"/>
        <end position="216"/>
    </location>
</feature>
<feature type="chain" id="PRO_0000038338" description="C-terminal core protein" evidence="1">
    <location>
        <begin position="68"/>
        <end position="216"/>
    </location>
</feature>
<feature type="region of interest" description="Disordered" evidence="2">
    <location>
        <begin position="1"/>
        <end position="32"/>
    </location>
</feature>
<feature type="region of interest" description="Acidic; interacts with host PACS1 and PACS2; stabilizes the interaction of NEF/MHC-I with host AP1M1; necessary for MHC-I internalization" evidence="1">
    <location>
        <begin position="72"/>
        <end position="75"/>
    </location>
</feature>
<feature type="region of interest" description="SH3-binding; interaction with Src family tyrosine kinases" evidence="1">
    <location>
        <begin position="79"/>
        <end position="88"/>
    </location>
</feature>
<feature type="region of interest" description="Mediates dimerization, Nef-PTE1 interaction" evidence="1">
    <location>
        <begin position="118"/>
        <end position="134"/>
    </location>
</feature>
<feature type="region of interest" description="Binding to ATP6V1H" evidence="1">
    <location>
        <begin position="158"/>
        <end position="190"/>
    </location>
</feature>
<feature type="short sequence motif" description="PxxP; stabilizes the interaction of NEF/MHC-I with host AP1M1; necessary for MHC-I internalization" evidence="1">
    <location>
        <begin position="82"/>
        <end position="85"/>
    </location>
</feature>
<feature type="short sequence motif" description="Dileucine internalization motif; necessary for CD4 internalization" evidence="1">
    <location>
        <begin position="174"/>
        <end position="175"/>
    </location>
</feature>
<feature type="short sequence motif" description="Diacidic; necessary for CD4 internalization" evidence="1">
    <location>
        <begin position="184"/>
        <end position="185"/>
    </location>
</feature>
<feature type="compositionally biased region" description="Basic and acidic residues" evidence="2">
    <location>
        <begin position="16"/>
        <end position="32"/>
    </location>
</feature>
<feature type="site" description="Might play a role in AP-1 recruitment to the Nef-MHC-I complex" evidence="1">
    <location>
        <position position="20"/>
    </location>
</feature>
<feature type="site" description="Cleavage; by viral protease" evidence="1">
    <location>
        <begin position="67"/>
        <end position="68"/>
    </location>
</feature>
<feature type="modified residue" description="Phosphoserine; by host" evidence="1">
    <location>
        <position position="6"/>
    </location>
</feature>
<feature type="lipid moiety-binding region" description="N-myristoyl glycine; by host" evidence="1">
    <location>
        <position position="2"/>
    </location>
</feature>
<protein>
    <recommendedName>
        <fullName evidence="1">Protein Nef</fullName>
    </recommendedName>
    <alternativeName>
        <fullName evidence="1">3'ORF</fullName>
    </alternativeName>
    <alternativeName>
        <fullName evidence="1">Negative factor</fullName>
        <shortName evidence="1">F-protein</shortName>
    </alternativeName>
    <component>
        <recommendedName>
            <fullName evidence="1">C-terminal core protein</fullName>
        </recommendedName>
    </component>
</protein>
<name>NEF_HV1JR</name>
<keyword id="KW-0014">AIDS</keyword>
<keyword id="KW-0053">Apoptosis</keyword>
<keyword id="KW-0244">Early protein</keyword>
<keyword id="KW-1032">Host cell membrane</keyword>
<keyword id="KW-1040">Host Golgi apparatus</keyword>
<keyword id="KW-1043">Host membrane</keyword>
<keyword id="KW-0945">Host-virus interaction</keyword>
<keyword id="KW-1080">Inhibition of host adaptive immune response by virus</keyword>
<keyword id="KW-1083">Inhibition of host autophagy by virus</keyword>
<keyword id="KW-1115">Inhibition of host MHC class I molecule presentation by virus</keyword>
<keyword id="KW-1116">Inhibition of host MHC class II molecule presentation by virus</keyword>
<keyword id="KW-0449">Lipoprotein</keyword>
<keyword id="KW-0472">Membrane</keyword>
<keyword id="KW-0519">Myristate</keyword>
<keyword id="KW-0597">Phosphoprotein</keyword>
<keyword id="KW-0964">Secreted</keyword>
<keyword id="KW-0729">SH3-binding</keyword>
<keyword id="KW-0899">Viral immunoevasion</keyword>
<keyword id="KW-0946">Virion</keyword>
<keyword id="KW-0843">Virulence</keyword>
<reference key="1">
    <citation type="submission" date="1988-12" db="EMBL/GenBank/DDBJ databases">
        <authorList>
            <person name="Koyanagi S."/>
            <person name="Chen I.S.Y."/>
        </authorList>
    </citation>
    <scope>NUCLEOTIDE SEQUENCE [GENOMIC RNA]</scope>
</reference>
<organism>
    <name type="scientific">Human immunodeficiency virus type 1 group M subtype B (isolate JRCSF)</name>
    <name type="common">HIV-1</name>
    <dbReference type="NCBI Taxonomy" id="11688"/>
    <lineage>
        <taxon>Viruses</taxon>
        <taxon>Riboviria</taxon>
        <taxon>Pararnavirae</taxon>
        <taxon>Artverviricota</taxon>
        <taxon>Revtraviricetes</taxon>
        <taxon>Ortervirales</taxon>
        <taxon>Retroviridae</taxon>
        <taxon>Orthoretrovirinae</taxon>
        <taxon>Lentivirus</taxon>
        <taxon>Human immunodeficiency virus type 1</taxon>
    </lineage>
</organism>
<accession>P20867</accession>
<comment type="function">
    <text evidence="1">Factor of infectivity and pathogenicity, required for optimal virus replication. Alters numerous pathways of T-lymphocyte function and down-regulates immunity surface molecules in order to evade host defense and increase viral infectivity. Alters the functionality of other immunity cells, like dendritic cells, monocytes/macrophages and NK cells.</text>
</comment>
<comment type="function">
    <text evidence="1">In infected CD4(+) T-lymphocytes, down-regulates the surface MHC-I, mature MHC-II, CD4, CD28, CCR5 and CXCR4 molecules. Mediates internalization and degradation of host CD4 through the interaction of with the cytoplasmic tail of CD4, the recruitment of AP-2 (clathrin adapter protein complex 2), internalization through clathrin coated pits, and subsequent transport to endosomes and lysosomes for degradation. Diverts host MHC-I molecules to the trans-Golgi network-associated endosomal compartments by an endocytic pathway to finally target them for degradation. MHC-I down-regulation may involve AP-1 (clathrin adapter protein complex 1) or possibly Src family kinase-ZAP70/Syk-PI3K cascade recruited by PACS2. In consequence infected cells are masked for immune recognition by cytotoxic T-lymphocytes. Decreasing the number of immune receptors also prevents reinfection by more HIV particles (superinfection). Down-regulates host SERINC3 and SERINC5 thereby excluding these proteins from the viral particles. Virion infectivity is drastically higher when SERINC3 or SERINC5 are excluded from the viral envelope, because these host antiviral proteins impair the membrane fusion event necessary for subsequent virion penetration.</text>
</comment>
<comment type="function">
    <text evidence="1">Bypasses host T-cell signaling by inducing a transcriptional program nearly identical to that of anti-CD3 cell activation. Interaction with TCR-zeta chain up-regulates the Fas ligand (FasL). Increasing surface FasL molecules and decreasing surface MHC-I molecules on infected CD4(+) cells send attacking cytotoxic CD8+ T-lymphocytes into apoptosis.</text>
</comment>
<comment type="function">
    <text evidence="1">Plays a role in optimizing the host cell environment for viral replication without causing cell death by apoptosis. Protects the infected cells from apoptosis in order to keep them alive until the next virus generation is ready to strike. Inhibits the Fas and TNFR-mediated death signals by blocking MAP3K5/ASK1. Decreases the half-life of TP53, protecting the infected cell against p53-mediated apoptosis. Inhibits the apoptotic signals regulated by the Bcl-2 family proteins through the formation of a Nef/PI3-kinase/PAK2 complex that leads to activation of PAK2 and induces phosphorylation of host BAD.</text>
</comment>
<comment type="function">
    <text evidence="1">Extracellular Nef protein targets CD4(+) T-lymphocytes for apoptosis by interacting with CXCR4 surface receptors.</text>
</comment>
<comment type="subunit">
    <text evidence="1">Monomer; cytosolic form. Homodimer; membrane bound form. Interacts with Nef associated p21-activated kinase (PAK2); this interaction activates PAK2. Associates with the Nef-MHC-I-AP1 complex; this complex is required for MHC-I internalization. Interacts (via C-terminus) with host PI3-kinase. Interacts with host PACS1; this interaction seems to be weak. Interacts with host PACS2. Interacts with host LCK and MAPK3; these interactions inhibit the kinase activity of the latter. Interacts with host ATP6V1H; this interaction may play a role in CD4 endocytosis. Associates with the CD4-Nef-AP2 complex; this complex is required for CD4 internalization. Interacts with host AP2 subunit alpha and AP2 subunit sigma2. Interacts with TCR-zeta chain; this interaction up-regulates the Fas ligand (FasL) surface expression. Interacts with host HCK, LYN, and SRC; these interactions activate the Src family kinases. Interacts with MAP3K5; this interaction inhibits the Fas and TNFR-mediated death signals. Interacts with beta-COP and PTE1. Interacts with human RACK1; this increases Nef phosphorylation by PKC. Interacts with TP53; this interaction decreases the half-life of TP53, protecting the infected cell against p53-mediated apoptosis.</text>
</comment>
<comment type="subcellular location">
    <subcellularLocation>
        <location evidence="1">Host cell membrane</location>
        <topology evidence="1">Lipid-anchor</topology>
        <orientation evidence="1">Cytoplasmic side</orientation>
    </subcellularLocation>
    <subcellularLocation>
        <location evidence="1">Virion</location>
    </subcellularLocation>
    <subcellularLocation>
        <location evidence="1">Secreted</location>
    </subcellularLocation>
    <subcellularLocation>
        <location evidence="1">Host Golgi apparatus membrane</location>
    </subcellularLocation>
    <text evidence="1">TGN localization requires PACS1. Associates with the inner plasma membrane through its N-terminal domain. Nef stimulates its own export via the release of exosomes. Incorporated in virions at a rate of about 10 molecules per virion, where it is cleaved.</text>
</comment>
<comment type="induction">
    <text evidence="1">Expressed early in the viral replication cycle.</text>
</comment>
<comment type="domain">
    <text evidence="1">The N-terminal domain is composed of the N-myristoyl glycine and of a cluster of positively charged amino acids. It is required for inner plasma membrane targeting of Nef and virion incorporation, and thereby for infectivity. This domain is also involved in binding to TP53.</text>
</comment>
<comment type="domain">
    <text evidence="1">The SH3-binding domain constituted of PxxP motifs mediates binding to several Src family proteins thereby regulating their tyrosine kinase activity. The same motifs also mediates the association with MAPK3, PI3-kinase and TCR-zeta.</text>
</comment>
<comment type="domain">
    <text evidence="1">The dileucine internalization motif and a diacidic motif seem to be required for binding to AP-2.</text>
</comment>
<comment type="domain">
    <text evidence="1">The acidic region binds to the sorting protein PACS-2, which targets Nef to the paranuclear region, enabling the PxxP motif to direct assembly of an SFK/ZAP-70/PI3K complex that accelerates endocytosis of cell-surface MHC-I.</text>
</comment>
<comment type="PTM">
    <text evidence="1">The virion-associated Nef proteins are cleaved by the viral protease to release the soluble C-terminal core protein. Nef is probably cleaved concomitantly with viral structural proteins on maturation of virus particles.</text>
</comment>
<comment type="PTM">
    <text evidence="1">Myristoylated.</text>
</comment>
<comment type="PTM">
    <text evidence="1">Phosphorylated on serine residues, probably by host PKCdelta and theta.</text>
</comment>
<comment type="miscellaneous">
    <text evidence="1">HIV-1 lineages are divided in three main groups, M (for Major), O (for Outlier), and N (for New, or Non-M, Non-O). The vast majority of strains found worldwide belong to the group M. Group O seems to be endemic to and largely confined to Cameroon and neighboring countries in West Central Africa, where these viruses represent a small minority of HIV-1 strains. The group N is represented by a limited number of isolates from Cameroonian persons. The group M is further subdivided in 9 clades or subtypes (A to D, F to H, J and K).</text>
</comment>
<comment type="similarity">
    <text evidence="1">Belongs to the lentivirus primate group Nef protein family.</text>
</comment>
<gene>
    <name evidence="1" type="primary">nef</name>
</gene>
<evidence type="ECO:0000255" key="1">
    <source>
        <dbReference type="HAMAP-Rule" id="MF_04078"/>
    </source>
</evidence>
<evidence type="ECO:0000256" key="2">
    <source>
        <dbReference type="SAM" id="MobiDB-lite"/>
    </source>
</evidence>
<dbReference type="EMBL" id="M38429">
    <property type="protein sequence ID" value="AAB03750.1"/>
    <property type="molecule type" value="Genomic_RNA"/>
</dbReference>
<dbReference type="SMR" id="P20867"/>
<dbReference type="Proteomes" id="UP000007695">
    <property type="component" value="Genome"/>
</dbReference>
<dbReference type="GO" id="GO:0005576">
    <property type="term" value="C:extracellular region"/>
    <property type="evidence" value="ECO:0007669"/>
    <property type="project" value="UniProtKB-SubCell"/>
</dbReference>
<dbReference type="GO" id="GO:0044178">
    <property type="term" value="C:host cell Golgi membrane"/>
    <property type="evidence" value="ECO:0007669"/>
    <property type="project" value="UniProtKB-SubCell"/>
</dbReference>
<dbReference type="GO" id="GO:0020002">
    <property type="term" value="C:host cell plasma membrane"/>
    <property type="evidence" value="ECO:0007669"/>
    <property type="project" value="UniProtKB-SubCell"/>
</dbReference>
<dbReference type="GO" id="GO:0016020">
    <property type="term" value="C:membrane"/>
    <property type="evidence" value="ECO:0007669"/>
    <property type="project" value="UniProtKB-UniRule"/>
</dbReference>
<dbReference type="GO" id="GO:0044423">
    <property type="term" value="C:virion component"/>
    <property type="evidence" value="ECO:0007669"/>
    <property type="project" value="UniProtKB-UniRule"/>
</dbReference>
<dbReference type="GO" id="GO:0005525">
    <property type="term" value="F:GTP binding"/>
    <property type="evidence" value="ECO:0007669"/>
    <property type="project" value="UniProtKB-UniRule"/>
</dbReference>
<dbReference type="GO" id="GO:0017124">
    <property type="term" value="F:SH3 domain binding"/>
    <property type="evidence" value="ECO:0007669"/>
    <property type="project" value="UniProtKB-UniRule"/>
</dbReference>
<dbReference type="GO" id="GO:0046776">
    <property type="term" value="P:symbiont-mediated suppression of host antigen processing and presentation of peptide antigen via MHC class I"/>
    <property type="evidence" value="ECO:0007669"/>
    <property type="project" value="UniProtKB-UniRule"/>
</dbReference>
<dbReference type="GO" id="GO:0039505">
    <property type="term" value="P:symbiont-mediated suppression of host antigen processing and presentation of peptide antigen via MHC class II"/>
    <property type="evidence" value="ECO:0007669"/>
    <property type="project" value="UniProtKB-UniRule"/>
</dbReference>
<dbReference type="GO" id="GO:0140321">
    <property type="term" value="P:symbiont-mediated suppression of host autophagy"/>
    <property type="evidence" value="ECO:0007669"/>
    <property type="project" value="UniProtKB-KW"/>
</dbReference>
<dbReference type="FunFam" id="3.30.62.10:FF:000001">
    <property type="entry name" value="Protein Nef"/>
    <property type="match status" value="1"/>
</dbReference>
<dbReference type="Gene3D" id="4.10.890.10">
    <property type="entry name" value="HIV 1 nef anchor domain"/>
    <property type="match status" value="2"/>
</dbReference>
<dbReference type="Gene3D" id="3.30.62.10">
    <property type="entry name" value="Nef Regulatory Factor"/>
    <property type="match status" value="1"/>
</dbReference>
<dbReference type="HAMAP" id="MF_04078">
    <property type="entry name" value="NEF_HIV"/>
    <property type="match status" value="1"/>
</dbReference>
<dbReference type="InterPro" id="IPR027480">
    <property type="entry name" value="HIV-1_Nef_anchor_sf"/>
</dbReference>
<dbReference type="InterPro" id="IPR027481">
    <property type="entry name" value="HIV-1_Nef_core_sf"/>
</dbReference>
<dbReference type="InterPro" id="IPR001558">
    <property type="entry name" value="HIV_Nef"/>
</dbReference>
<dbReference type="Pfam" id="PF00469">
    <property type="entry name" value="F-protein"/>
    <property type="match status" value="1"/>
</dbReference>
<dbReference type="SUPFAM" id="SSF55671">
    <property type="entry name" value="Regulatory factor Nef"/>
    <property type="match status" value="1"/>
</dbReference>